<sequence>MKQLYGVIGNPIGHSLSPVMHNDAFEHLNMDAHYLAFLVEEEALGEAVKGLKALGISGFNVTTPHKVAIMEYLDEIAPLARQIGAVNTVVHRDGKLIGYNTDGIGFVRALQSISEDPLQEKRILLIGAGGASRAIYFSLADVGVKEIDIANRTRDKAKNLISGCMENVNSHALSLECAAENQGEYDIIIQTTTIGMHPHVEYTPLEIRSLKQGTIVSDIIYNPFETKILGDAKEQGAIIQNGIDMFVYQGALAFEMWTGCVPNIDRMKQLVMRELGG</sequence>
<gene>
    <name evidence="1" type="primary">aroE</name>
    <name type="ordered locus">BcerKBAB4_4185</name>
</gene>
<evidence type="ECO:0000255" key="1">
    <source>
        <dbReference type="HAMAP-Rule" id="MF_00222"/>
    </source>
</evidence>
<reference key="1">
    <citation type="journal article" date="2008" name="Chem. Biol. Interact.">
        <title>Extending the Bacillus cereus group genomics to putative food-borne pathogens of different toxicity.</title>
        <authorList>
            <person name="Lapidus A."/>
            <person name="Goltsman E."/>
            <person name="Auger S."/>
            <person name="Galleron N."/>
            <person name="Segurens B."/>
            <person name="Dossat C."/>
            <person name="Land M.L."/>
            <person name="Broussolle V."/>
            <person name="Brillard J."/>
            <person name="Guinebretiere M.-H."/>
            <person name="Sanchis V."/>
            <person name="Nguen-the C."/>
            <person name="Lereclus D."/>
            <person name="Richardson P."/>
            <person name="Wincker P."/>
            <person name="Weissenbach J."/>
            <person name="Ehrlich S.D."/>
            <person name="Sorokin A."/>
        </authorList>
    </citation>
    <scope>NUCLEOTIDE SEQUENCE [LARGE SCALE GENOMIC DNA]</scope>
    <source>
        <strain>KBAB4</strain>
    </source>
</reference>
<comment type="function">
    <text evidence="1">Involved in the biosynthesis of the chorismate, which leads to the biosynthesis of aromatic amino acids. Catalyzes the reversible NADPH linked reduction of 3-dehydroshikimate (DHSA) to yield shikimate (SA).</text>
</comment>
<comment type="catalytic activity">
    <reaction evidence="1">
        <text>shikimate + NADP(+) = 3-dehydroshikimate + NADPH + H(+)</text>
        <dbReference type="Rhea" id="RHEA:17737"/>
        <dbReference type="ChEBI" id="CHEBI:15378"/>
        <dbReference type="ChEBI" id="CHEBI:16630"/>
        <dbReference type="ChEBI" id="CHEBI:36208"/>
        <dbReference type="ChEBI" id="CHEBI:57783"/>
        <dbReference type="ChEBI" id="CHEBI:58349"/>
        <dbReference type="EC" id="1.1.1.25"/>
    </reaction>
</comment>
<comment type="pathway">
    <text evidence="1">Metabolic intermediate biosynthesis; chorismate biosynthesis; chorismate from D-erythrose 4-phosphate and phosphoenolpyruvate: step 4/7.</text>
</comment>
<comment type="subunit">
    <text evidence="1">Homodimer.</text>
</comment>
<comment type="similarity">
    <text evidence="1">Belongs to the shikimate dehydrogenase family.</text>
</comment>
<keyword id="KW-0028">Amino-acid biosynthesis</keyword>
<keyword id="KW-0057">Aromatic amino acid biosynthesis</keyword>
<keyword id="KW-0521">NADP</keyword>
<keyword id="KW-0560">Oxidoreductase</keyword>
<protein>
    <recommendedName>
        <fullName evidence="1">Shikimate dehydrogenase (NADP(+))</fullName>
        <shortName evidence="1">SDH</shortName>
        <ecNumber evidence="1">1.1.1.25</ecNumber>
    </recommendedName>
</protein>
<accession>A9VHW1</accession>
<dbReference type="EC" id="1.1.1.25" evidence="1"/>
<dbReference type="EMBL" id="CP000903">
    <property type="protein sequence ID" value="ABY45346.1"/>
    <property type="molecule type" value="Genomic_DNA"/>
</dbReference>
<dbReference type="RefSeq" id="WP_012261724.1">
    <property type="nucleotide sequence ID" value="NC_010184.1"/>
</dbReference>
<dbReference type="SMR" id="A9VHW1"/>
<dbReference type="KEGG" id="bwe:BcerKBAB4_4185"/>
<dbReference type="eggNOG" id="COG0169">
    <property type="taxonomic scope" value="Bacteria"/>
</dbReference>
<dbReference type="HOGENOM" id="CLU_044063_4_1_9"/>
<dbReference type="UniPathway" id="UPA00053">
    <property type="reaction ID" value="UER00087"/>
</dbReference>
<dbReference type="Proteomes" id="UP000002154">
    <property type="component" value="Chromosome"/>
</dbReference>
<dbReference type="GO" id="GO:0005829">
    <property type="term" value="C:cytosol"/>
    <property type="evidence" value="ECO:0007669"/>
    <property type="project" value="TreeGrafter"/>
</dbReference>
<dbReference type="GO" id="GO:0050661">
    <property type="term" value="F:NADP binding"/>
    <property type="evidence" value="ECO:0007669"/>
    <property type="project" value="InterPro"/>
</dbReference>
<dbReference type="GO" id="GO:0004764">
    <property type="term" value="F:shikimate 3-dehydrogenase (NADP+) activity"/>
    <property type="evidence" value="ECO:0007669"/>
    <property type="project" value="UniProtKB-UniRule"/>
</dbReference>
<dbReference type="GO" id="GO:0008652">
    <property type="term" value="P:amino acid biosynthetic process"/>
    <property type="evidence" value="ECO:0007669"/>
    <property type="project" value="UniProtKB-KW"/>
</dbReference>
<dbReference type="GO" id="GO:0009073">
    <property type="term" value="P:aromatic amino acid family biosynthetic process"/>
    <property type="evidence" value="ECO:0007669"/>
    <property type="project" value="UniProtKB-KW"/>
</dbReference>
<dbReference type="GO" id="GO:0009423">
    <property type="term" value="P:chorismate biosynthetic process"/>
    <property type="evidence" value="ECO:0007669"/>
    <property type="project" value="UniProtKB-UniRule"/>
</dbReference>
<dbReference type="GO" id="GO:0019632">
    <property type="term" value="P:shikimate metabolic process"/>
    <property type="evidence" value="ECO:0007669"/>
    <property type="project" value="InterPro"/>
</dbReference>
<dbReference type="CDD" id="cd01065">
    <property type="entry name" value="NAD_bind_Shikimate_DH"/>
    <property type="match status" value="1"/>
</dbReference>
<dbReference type="FunFam" id="3.40.50.10860:FF:000011">
    <property type="entry name" value="Shikimate dehydrogenase (NADP(+))"/>
    <property type="match status" value="1"/>
</dbReference>
<dbReference type="Gene3D" id="3.40.50.10860">
    <property type="entry name" value="Leucine Dehydrogenase, chain A, domain 1"/>
    <property type="match status" value="1"/>
</dbReference>
<dbReference type="Gene3D" id="3.40.50.720">
    <property type="entry name" value="NAD(P)-binding Rossmann-like Domain"/>
    <property type="match status" value="1"/>
</dbReference>
<dbReference type="HAMAP" id="MF_00222">
    <property type="entry name" value="Shikimate_DH_AroE"/>
    <property type="match status" value="1"/>
</dbReference>
<dbReference type="InterPro" id="IPR046346">
    <property type="entry name" value="Aminoacid_DH-like_N_sf"/>
</dbReference>
<dbReference type="InterPro" id="IPR036291">
    <property type="entry name" value="NAD(P)-bd_dom_sf"/>
</dbReference>
<dbReference type="InterPro" id="IPR041121">
    <property type="entry name" value="SDH_C"/>
</dbReference>
<dbReference type="InterPro" id="IPR011342">
    <property type="entry name" value="Shikimate_DH"/>
</dbReference>
<dbReference type="InterPro" id="IPR013708">
    <property type="entry name" value="Shikimate_DH-bd_N"/>
</dbReference>
<dbReference type="InterPro" id="IPR022893">
    <property type="entry name" value="Shikimate_DH_fam"/>
</dbReference>
<dbReference type="InterPro" id="IPR006151">
    <property type="entry name" value="Shikm_DH/Glu-tRNA_Rdtase"/>
</dbReference>
<dbReference type="NCBIfam" id="TIGR00507">
    <property type="entry name" value="aroE"/>
    <property type="match status" value="1"/>
</dbReference>
<dbReference type="NCBIfam" id="NF001319">
    <property type="entry name" value="PRK00258.3-3"/>
    <property type="match status" value="1"/>
</dbReference>
<dbReference type="PANTHER" id="PTHR21089:SF1">
    <property type="entry name" value="BIFUNCTIONAL 3-DEHYDROQUINATE DEHYDRATASE_SHIKIMATE DEHYDROGENASE, CHLOROPLASTIC"/>
    <property type="match status" value="1"/>
</dbReference>
<dbReference type="PANTHER" id="PTHR21089">
    <property type="entry name" value="SHIKIMATE DEHYDROGENASE"/>
    <property type="match status" value="1"/>
</dbReference>
<dbReference type="Pfam" id="PF18317">
    <property type="entry name" value="SDH_C"/>
    <property type="match status" value="1"/>
</dbReference>
<dbReference type="Pfam" id="PF01488">
    <property type="entry name" value="Shikimate_DH"/>
    <property type="match status" value="1"/>
</dbReference>
<dbReference type="Pfam" id="PF08501">
    <property type="entry name" value="Shikimate_dh_N"/>
    <property type="match status" value="1"/>
</dbReference>
<dbReference type="SUPFAM" id="SSF53223">
    <property type="entry name" value="Aminoacid dehydrogenase-like, N-terminal domain"/>
    <property type="match status" value="1"/>
</dbReference>
<dbReference type="SUPFAM" id="SSF51735">
    <property type="entry name" value="NAD(P)-binding Rossmann-fold domains"/>
    <property type="match status" value="1"/>
</dbReference>
<feature type="chain" id="PRO_1000100104" description="Shikimate dehydrogenase (NADP(+))">
    <location>
        <begin position="1"/>
        <end position="277"/>
    </location>
</feature>
<feature type="active site" description="Proton acceptor" evidence="1">
    <location>
        <position position="66"/>
    </location>
</feature>
<feature type="binding site" evidence="1">
    <location>
        <begin position="15"/>
        <end position="17"/>
    </location>
    <ligand>
        <name>shikimate</name>
        <dbReference type="ChEBI" id="CHEBI:36208"/>
    </ligand>
</feature>
<feature type="binding site" evidence="1">
    <location>
        <position position="62"/>
    </location>
    <ligand>
        <name>shikimate</name>
        <dbReference type="ChEBI" id="CHEBI:36208"/>
    </ligand>
</feature>
<feature type="binding site" evidence="1">
    <location>
        <position position="87"/>
    </location>
    <ligand>
        <name>shikimate</name>
        <dbReference type="ChEBI" id="CHEBI:36208"/>
    </ligand>
</feature>
<feature type="binding site" evidence="1">
    <location>
        <position position="102"/>
    </location>
    <ligand>
        <name>shikimate</name>
        <dbReference type="ChEBI" id="CHEBI:36208"/>
    </ligand>
</feature>
<feature type="binding site" evidence="1">
    <location>
        <begin position="127"/>
        <end position="131"/>
    </location>
    <ligand>
        <name>NADP(+)</name>
        <dbReference type="ChEBI" id="CHEBI:58349"/>
    </ligand>
</feature>
<feature type="binding site" evidence="1">
    <location>
        <begin position="151"/>
        <end position="156"/>
    </location>
    <ligand>
        <name>NADP(+)</name>
        <dbReference type="ChEBI" id="CHEBI:58349"/>
    </ligand>
</feature>
<feature type="binding site" evidence="1">
    <location>
        <position position="219"/>
    </location>
    <ligand>
        <name>NADP(+)</name>
        <dbReference type="ChEBI" id="CHEBI:58349"/>
    </ligand>
</feature>
<feature type="binding site" evidence="1">
    <location>
        <position position="221"/>
    </location>
    <ligand>
        <name>shikimate</name>
        <dbReference type="ChEBI" id="CHEBI:36208"/>
    </ligand>
</feature>
<feature type="binding site" evidence="1">
    <location>
        <position position="242"/>
    </location>
    <ligand>
        <name>NADP(+)</name>
        <dbReference type="ChEBI" id="CHEBI:58349"/>
    </ligand>
</feature>
<proteinExistence type="inferred from homology"/>
<organism>
    <name type="scientific">Bacillus mycoides (strain KBAB4)</name>
    <name type="common">Bacillus weihenstephanensis</name>
    <dbReference type="NCBI Taxonomy" id="315730"/>
    <lineage>
        <taxon>Bacteria</taxon>
        <taxon>Bacillati</taxon>
        <taxon>Bacillota</taxon>
        <taxon>Bacilli</taxon>
        <taxon>Bacillales</taxon>
        <taxon>Bacillaceae</taxon>
        <taxon>Bacillus</taxon>
        <taxon>Bacillus cereus group</taxon>
    </lineage>
</organism>
<name>AROE_BACMK</name>